<keyword id="KW-0378">Hydrolase</keyword>
<keyword id="KW-1185">Reference proteome</keyword>
<keyword id="KW-0719">Serine esterase</keyword>
<dbReference type="EC" id="3.1.-.-"/>
<dbReference type="EMBL" id="L43967">
    <property type="protein sequence ID" value="AAC71532.1"/>
    <property type="molecule type" value="Genomic_DNA"/>
</dbReference>
<dbReference type="PIR" id="C64234">
    <property type="entry name" value="C64234"/>
</dbReference>
<dbReference type="RefSeq" id="WP_009885888.1">
    <property type="nucleotide sequence ID" value="NC_000908.2"/>
</dbReference>
<dbReference type="SMR" id="Q49412"/>
<dbReference type="FunCoup" id="Q49412">
    <property type="interactions" value="97"/>
</dbReference>
<dbReference type="STRING" id="243273.MG_310"/>
<dbReference type="ESTHER" id="mycge-esl1">
    <property type="family name" value="AlphaBeta_hydrolase"/>
</dbReference>
<dbReference type="GeneID" id="88282473"/>
<dbReference type="KEGG" id="mge:MG_310"/>
<dbReference type="eggNOG" id="COG2267">
    <property type="taxonomic scope" value="Bacteria"/>
</dbReference>
<dbReference type="HOGENOM" id="CLU_020336_41_1_14"/>
<dbReference type="InParanoid" id="Q49412"/>
<dbReference type="OrthoDB" id="403987at2"/>
<dbReference type="BioCyc" id="MGEN243273:G1GJ2-379-MONOMER"/>
<dbReference type="Proteomes" id="UP000000807">
    <property type="component" value="Chromosome"/>
</dbReference>
<dbReference type="GO" id="GO:0016020">
    <property type="term" value="C:membrane"/>
    <property type="evidence" value="ECO:0000318"/>
    <property type="project" value="GO_Central"/>
</dbReference>
<dbReference type="GO" id="GO:0052689">
    <property type="term" value="F:carboxylic ester hydrolase activity"/>
    <property type="evidence" value="ECO:0007669"/>
    <property type="project" value="UniProtKB-KW"/>
</dbReference>
<dbReference type="GO" id="GO:0016298">
    <property type="term" value="F:lipase activity"/>
    <property type="evidence" value="ECO:0000318"/>
    <property type="project" value="GO_Central"/>
</dbReference>
<dbReference type="Gene3D" id="3.40.50.1820">
    <property type="entry name" value="alpha/beta hydrolase"/>
    <property type="match status" value="1"/>
</dbReference>
<dbReference type="InterPro" id="IPR029058">
    <property type="entry name" value="AB_hydrolase_fold"/>
</dbReference>
<dbReference type="InterPro" id="IPR050266">
    <property type="entry name" value="AB_hydrolase_sf"/>
</dbReference>
<dbReference type="InterPro" id="IPR022742">
    <property type="entry name" value="Hydrolase_4"/>
</dbReference>
<dbReference type="PANTHER" id="PTHR43798:SF33">
    <property type="entry name" value="HYDROLASE, PUTATIVE (AFU_ORTHOLOGUE AFUA_2G14860)-RELATED"/>
    <property type="match status" value="1"/>
</dbReference>
<dbReference type="PANTHER" id="PTHR43798">
    <property type="entry name" value="MONOACYLGLYCEROL LIPASE"/>
    <property type="match status" value="1"/>
</dbReference>
<dbReference type="Pfam" id="PF12146">
    <property type="entry name" value="Hydrolase_4"/>
    <property type="match status" value="1"/>
</dbReference>
<dbReference type="SUPFAM" id="SSF53474">
    <property type="entry name" value="alpha/beta-Hydrolases"/>
    <property type="match status" value="1"/>
</dbReference>
<feature type="chain" id="PRO_0000207074" description="Putative esterase/lipase 1">
    <location>
        <begin position="1"/>
        <end position="268"/>
    </location>
</feature>
<feature type="active site" evidence="2">
    <location>
        <position position="27"/>
    </location>
</feature>
<feature type="active site" description="Charge relay system" evidence="1">
    <location>
        <position position="94"/>
    </location>
</feature>
<accession>Q49412</accession>
<comment type="similarity">
    <text evidence="3">Belongs to the lipase/esterase LIP3/BchO family.</text>
</comment>
<evidence type="ECO:0000250" key="1"/>
<evidence type="ECO:0000255" key="2"/>
<evidence type="ECO:0000305" key="3"/>
<protein>
    <recommendedName>
        <fullName>Putative esterase/lipase 1</fullName>
        <ecNumber>3.1.-.-</ecNumber>
    </recommendedName>
</protein>
<reference key="1">
    <citation type="journal article" date="1995" name="Science">
        <title>The minimal gene complement of Mycoplasma genitalium.</title>
        <authorList>
            <person name="Fraser C.M."/>
            <person name="Gocayne J.D."/>
            <person name="White O."/>
            <person name="Adams M.D."/>
            <person name="Clayton R.A."/>
            <person name="Fleischmann R.D."/>
            <person name="Bult C.J."/>
            <person name="Kerlavage A.R."/>
            <person name="Sutton G.G."/>
            <person name="Kelley J.M."/>
            <person name="Fritchman J.L."/>
            <person name="Weidman J.F."/>
            <person name="Small K.V."/>
            <person name="Sandusky M."/>
            <person name="Fuhrmann J.L."/>
            <person name="Nguyen D.T."/>
            <person name="Utterback T.R."/>
            <person name="Saudek D.M."/>
            <person name="Phillips C.A."/>
            <person name="Merrick J.M."/>
            <person name="Tomb J.-F."/>
            <person name="Dougherty B.A."/>
            <person name="Bott K.F."/>
            <person name="Hu P.-C."/>
            <person name="Lucier T.S."/>
            <person name="Peterson S.N."/>
            <person name="Smith H.O."/>
            <person name="Hutchison C.A. III"/>
            <person name="Venter J.C."/>
        </authorList>
    </citation>
    <scope>NUCLEOTIDE SEQUENCE [LARGE SCALE GENOMIC DNA]</scope>
    <source>
        <strain>ATCC 33530 / DSM 19775 / NCTC 10195 / G37</strain>
    </source>
</reference>
<organism>
    <name type="scientific">Mycoplasma genitalium (strain ATCC 33530 / DSM 19775 / NCTC 10195 / G37)</name>
    <name type="common">Mycoplasmoides genitalium</name>
    <dbReference type="NCBI Taxonomy" id="243273"/>
    <lineage>
        <taxon>Bacteria</taxon>
        <taxon>Bacillati</taxon>
        <taxon>Mycoplasmatota</taxon>
        <taxon>Mycoplasmoidales</taxon>
        <taxon>Mycoplasmoidaceae</taxon>
        <taxon>Mycoplasmoides</taxon>
    </lineage>
</organism>
<sequence length="268" mass="30747">MRLEIENGLEFVNDPVVNELGKICFFHPFTGNLTNKLSFRSHFNRYSFYAINYPGHGNSVINNPKQLEFSYWLEITKQFFDKHNLKDVILFGHSIGGGLAVALTNYLSSDQYKAVLLEAPLNPAIVETPLNIVQNLIPDPDSDFAVIQKCLVYNIEKKLGANFKEYCEREKQKSIHQNQRLKVMLEPSTLKQNIVLINAAFLKLNCPALWIHGKQDGIIKYLPSKAYYESLNNKQIQFKAIEAAAHTPYFEQPQKFLSLVNDFFQLIS</sequence>
<name>ESL1_MYCGE</name>
<gene>
    <name type="ordered locus">MG310</name>
</gene>
<proteinExistence type="inferred from homology"/>